<proteinExistence type="inferred from homology"/>
<protein>
    <recommendedName>
        <fullName evidence="1">tRNA (guanine(26)-N(2))-dimethyltransferase</fullName>
        <ecNumber evidence="1">2.1.1.216</ecNumber>
    </recommendedName>
    <alternativeName>
        <fullName evidence="1">tRNA 2,2-dimethylguanosine-26 methyltransferase</fullName>
    </alternativeName>
    <alternativeName>
        <fullName evidence="1">tRNA(guanine-26,N(2)-N(2)) methyltransferase</fullName>
    </alternativeName>
    <alternativeName>
        <fullName evidence="1">tRNA(m(2,2)G26)dimethyltransferase</fullName>
    </alternativeName>
</protein>
<dbReference type="EC" id="2.1.1.216" evidence="1"/>
<dbReference type="EMBL" id="CP001338">
    <property type="protein sequence ID" value="ACL17818.1"/>
    <property type="molecule type" value="Genomic_DNA"/>
</dbReference>
<dbReference type="RefSeq" id="WP_012619137.1">
    <property type="nucleotide sequence ID" value="NC_011832.1"/>
</dbReference>
<dbReference type="SMR" id="B8GF12"/>
<dbReference type="STRING" id="521011.Mpal_2545"/>
<dbReference type="GeneID" id="7270671"/>
<dbReference type="KEGG" id="mpl:Mpal_2545"/>
<dbReference type="eggNOG" id="arCOG01219">
    <property type="taxonomic scope" value="Archaea"/>
</dbReference>
<dbReference type="HOGENOM" id="CLU_010862_5_1_2"/>
<dbReference type="OrthoDB" id="372177at2157"/>
<dbReference type="Proteomes" id="UP000002457">
    <property type="component" value="Chromosome"/>
</dbReference>
<dbReference type="GO" id="GO:0160104">
    <property type="term" value="F:tRNA (guanine(26)-N2)-dimethyltransferase activity"/>
    <property type="evidence" value="ECO:0007669"/>
    <property type="project" value="UniProtKB-UniRule"/>
</dbReference>
<dbReference type="GO" id="GO:0000049">
    <property type="term" value="F:tRNA binding"/>
    <property type="evidence" value="ECO:0007669"/>
    <property type="project" value="UniProtKB-KW"/>
</dbReference>
<dbReference type="GO" id="GO:0002940">
    <property type="term" value="P:tRNA N2-guanine methylation"/>
    <property type="evidence" value="ECO:0007669"/>
    <property type="project" value="TreeGrafter"/>
</dbReference>
<dbReference type="Gene3D" id="3.30.56.70">
    <property type="entry name" value="N2,N2-dimethylguanosine tRNA methyltransferase, C-terminal domain"/>
    <property type="match status" value="1"/>
</dbReference>
<dbReference type="Gene3D" id="3.40.50.150">
    <property type="entry name" value="Vaccinia Virus protein VP39"/>
    <property type="match status" value="1"/>
</dbReference>
<dbReference type="HAMAP" id="MF_00290">
    <property type="entry name" value="tRNA_dimethyltr_TRM1"/>
    <property type="match status" value="1"/>
</dbReference>
<dbReference type="InterPro" id="IPR029063">
    <property type="entry name" value="SAM-dependent_MTases_sf"/>
</dbReference>
<dbReference type="InterPro" id="IPR002905">
    <property type="entry name" value="Trm1"/>
</dbReference>
<dbReference type="InterPro" id="IPR022923">
    <property type="entry name" value="TRM1_arc_bac"/>
</dbReference>
<dbReference type="InterPro" id="IPR042296">
    <property type="entry name" value="tRNA_met_Trm1_C"/>
</dbReference>
<dbReference type="NCBIfam" id="TIGR00308">
    <property type="entry name" value="TRM1"/>
    <property type="match status" value="1"/>
</dbReference>
<dbReference type="PANTHER" id="PTHR10631">
    <property type="entry name" value="N 2 ,N 2 -DIMETHYLGUANOSINE TRNA METHYLTRANSFERASE"/>
    <property type="match status" value="1"/>
</dbReference>
<dbReference type="PANTHER" id="PTHR10631:SF3">
    <property type="entry name" value="TRNA (GUANINE(26)-N(2))-DIMETHYLTRANSFERASE"/>
    <property type="match status" value="1"/>
</dbReference>
<dbReference type="Pfam" id="PF02005">
    <property type="entry name" value="TRM"/>
    <property type="match status" value="1"/>
</dbReference>
<dbReference type="SUPFAM" id="SSF53335">
    <property type="entry name" value="S-adenosyl-L-methionine-dependent methyltransferases"/>
    <property type="match status" value="1"/>
</dbReference>
<dbReference type="PROSITE" id="PS51626">
    <property type="entry name" value="SAM_MT_TRM1"/>
    <property type="match status" value="1"/>
</dbReference>
<comment type="function">
    <text evidence="1">Dimethylates a single guanine residue at position 26 of a number of tRNAs using S-adenosyl-L-methionine as donor of the methyl groups.</text>
</comment>
<comment type="catalytic activity">
    <reaction evidence="1">
        <text>guanosine(26) in tRNA + 2 S-adenosyl-L-methionine = N(2)-dimethylguanosine(26) in tRNA + 2 S-adenosyl-L-homocysteine + 2 H(+)</text>
        <dbReference type="Rhea" id="RHEA:43140"/>
        <dbReference type="Rhea" id="RHEA-COMP:10359"/>
        <dbReference type="Rhea" id="RHEA-COMP:10360"/>
        <dbReference type="ChEBI" id="CHEBI:15378"/>
        <dbReference type="ChEBI" id="CHEBI:57856"/>
        <dbReference type="ChEBI" id="CHEBI:59789"/>
        <dbReference type="ChEBI" id="CHEBI:74269"/>
        <dbReference type="ChEBI" id="CHEBI:74513"/>
        <dbReference type="EC" id="2.1.1.216"/>
    </reaction>
</comment>
<comment type="similarity">
    <text evidence="1">Belongs to the class I-like SAM-binding methyltransferase superfamily. Trm1 family.</text>
</comment>
<feature type="chain" id="PRO_1000197037" description="tRNA (guanine(26)-N(2))-dimethyltransferase">
    <location>
        <begin position="1"/>
        <end position="371"/>
    </location>
</feature>
<feature type="domain" description="Trm1 methyltransferase" evidence="1">
    <location>
        <begin position="4"/>
        <end position="368"/>
    </location>
</feature>
<feature type="binding site" evidence="1">
    <location>
        <position position="41"/>
    </location>
    <ligand>
        <name>S-adenosyl-L-methionine</name>
        <dbReference type="ChEBI" id="CHEBI:59789"/>
    </ligand>
</feature>
<feature type="binding site" evidence="1">
    <location>
        <position position="66"/>
    </location>
    <ligand>
        <name>S-adenosyl-L-methionine</name>
        <dbReference type="ChEBI" id="CHEBI:59789"/>
    </ligand>
</feature>
<feature type="binding site" evidence="1">
    <location>
        <position position="82"/>
    </location>
    <ligand>
        <name>S-adenosyl-L-methionine</name>
        <dbReference type="ChEBI" id="CHEBI:59789"/>
    </ligand>
</feature>
<feature type="binding site" evidence="1">
    <location>
        <position position="108"/>
    </location>
    <ligand>
        <name>S-adenosyl-L-methionine</name>
        <dbReference type="ChEBI" id="CHEBI:59789"/>
    </ligand>
</feature>
<feature type="binding site" evidence="1">
    <location>
        <position position="109"/>
    </location>
    <ligand>
        <name>S-adenosyl-L-methionine</name>
        <dbReference type="ChEBI" id="CHEBI:59789"/>
    </ligand>
</feature>
<feature type="binding site" evidence="1">
    <location>
        <position position="237"/>
    </location>
    <ligand>
        <name>Zn(2+)</name>
        <dbReference type="ChEBI" id="CHEBI:29105"/>
    </ligand>
</feature>
<feature type="binding site" evidence="1">
    <location>
        <position position="240"/>
    </location>
    <ligand>
        <name>Zn(2+)</name>
        <dbReference type="ChEBI" id="CHEBI:29105"/>
    </ligand>
</feature>
<feature type="binding site" evidence="1">
    <location>
        <position position="256"/>
    </location>
    <ligand>
        <name>Zn(2+)</name>
        <dbReference type="ChEBI" id="CHEBI:29105"/>
    </ligand>
</feature>
<feature type="binding site" evidence="1">
    <location>
        <position position="259"/>
    </location>
    <ligand>
        <name>Zn(2+)</name>
        <dbReference type="ChEBI" id="CHEBI:29105"/>
    </ligand>
</feature>
<keyword id="KW-0479">Metal-binding</keyword>
<keyword id="KW-0489">Methyltransferase</keyword>
<keyword id="KW-1185">Reference proteome</keyword>
<keyword id="KW-0694">RNA-binding</keyword>
<keyword id="KW-0949">S-adenosyl-L-methionine</keyword>
<keyword id="KW-0808">Transferase</keyword>
<keyword id="KW-0819">tRNA processing</keyword>
<keyword id="KW-0820">tRNA-binding</keyword>
<keyword id="KW-0862">Zinc</keyword>
<organism>
    <name type="scientific">Methanosphaerula palustris (strain ATCC BAA-1556 / DSM 19958 / E1-9c)</name>
    <dbReference type="NCBI Taxonomy" id="521011"/>
    <lineage>
        <taxon>Archaea</taxon>
        <taxon>Methanobacteriati</taxon>
        <taxon>Methanobacteriota</taxon>
        <taxon>Stenosarchaea group</taxon>
        <taxon>Methanomicrobia</taxon>
        <taxon>Methanomicrobiales</taxon>
        <taxon>Methanoregulaceae</taxon>
        <taxon>Methanosphaerula</taxon>
    </lineage>
</organism>
<name>TRM1_METPE</name>
<evidence type="ECO:0000255" key="1">
    <source>
        <dbReference type="HAMAP-Rule" id="MF_00290"/>
    </source>
</evidence>
<sequence>MDLIEVTEGRTTFRIPVQDPNSPFPPSSAPVFFNPKMAMNRDATVLLLSVLNPEEYLDTMGASGVRGLRVAGECRIPVVINDRDPAAADLIRANLAGAGLEGRVTVEDANVLLSRERFDAVDLDPFGSPAPFTDAACRSAKRYLFVTATDTAPLCGAHLKAGIRRYATKPLNTEYHAEVGLRILLGYVARTMVKYDRGLSPLFCFASAHFLRLHLQAEKGADAADRTVARLGFLYHCPSCPERTEEPGVLPHDHVCPRCGTTMLPIGPLWLGSLSDMALLDQMKERLPDLSLSTERRLGKLLDVLKVELPTSSHYDYHRIAKWIGGSPPAIDVVIARLIQTGYRASRAHYSGTALKTDAPLDAIAAALSAQ</sequence>
<accession>B8GF12</accession>
<gene>
    <name evidence="1" type="primary">trm1</name>
    <name type="ordered locus">Mpal_2545</name>
</gene>
<reference key="1">
    <citation type="journal article" date="2015" name="Genome Announc.">
        <title>Complete Genome Sequence of Methanosphaerula palustris E1-9CT, a Hydrogenotrophic Methanogen Isolated from a Minerotrophic Fen Peatland.</title>
        <authorList>
            <person name="Cadillo-Quiroz H."/>
            <person name="Browne P."/>
            <person name="Kyrpides N."/>
            <person name="Woyke T."/>
            <person name="Goodwin L."/>
            <person name="Detter C."/>
            <person name="Yavitt J.B."/>
            <person name="Zinder S.H."/>
        </authorList>
    </citation>
    <scope>NUCLEOTIDE SEQUENCE [LARGE SCALE GENOMIC DNA]</scope>
    <source>
        <strain>ATCC BAA-1556 / DSM 19958 / E1-9c</strain>
    </source>
</reference>